<reference key="1">
    <citation type="journal article" date="2005" name="Nature">
        <title>The map-based sequence of the rice genome.</title>
        <authorList>
            <consortium name="International rice genome sequencing project (IRGSP)"/>
        </authorList>
    </citation>
    <scope>NUCLEOTIDE SEQUENCE [LARGE SCALE GENOMIC DNA]</scope>
    <source>
        <strain>cv. Nipponbare</strain>
    </source>
</reference>
<reference key="2">
    <citation type="journal article" date="2008" name="Nucleic Acids Res.">
        <title>The rice annotation project database (RAP-DB): 2008 update.</title>
        <authorList>
            <consortium name="The rice annotation project (RAP)"/>
        </authorList>
    </citation>
    <scope>GENOME REANNOTATION</scope>
    <source>
        <strain>cv. Nipponbare</strain>
    </source>
</reference>
<reference key="3">
    <citation type="journal article" date="2013" name="Rice">
        <title>Improvement of the Oryza sativa Nipponbare reference genome using next generation sequence and optical map data.</title>
        <authorList>
            <person name="Kawahara Y."/>
            <person name="de la Bastide M."/>
            <person name="Hamilton J.P."/>
            <person name="Kanamori H."/>
            <person name="McCombie W.R."/>
            <person name="Ouyang S."/>
            <person name="Schwartz D.C."/>
            <person name="Tanaka T."/>
            <person name="Wu J."/>
            <person name="Zhou S."/>
            <person name="Childs K.L."/>
            <person name="Davidson R.M."/>
            <person name="Lin H."/>
            <person name="Quesada-Ocampo L."/>
            <person name="Vaillancourt B."/>
            <person name="Sakai H."/>
            <person name="Lee S.S."/>
            <person name="Kim J."/>
            <person name="Numa H."/>
            <person name="Itoh T."/>
            <person name="Buell C.R."/>
            <person name="Matsumoto T."/>
        </authorList>
    </citation>
    <scope>GENOME REANNOTATION</scope>
    <source>
        <strain>cv. Nipponbare</strain>
    </source>
</reference>
<reference key="4">
    <citation type="journal article" date="2005" name="PLoS Biol.">
        <title>The genomes of Oryza sativa: a history of duplications.</title>
        <authorList>
            <person name="Yu J."/>
            <person name="Wang J."/>
            <person name="Lin W."/>
            <person name="Li S."/>
            <person name="Li H."/>
            <person name="Zhou J."/>
            <person name="Ni P."/>
            <person name="Dong W."/>
            <person name="Hu S."/>
            <person name="Zeng C."/>
            <person name="Zhang J."/>
            <person name="Zhang Y."/>
            <person name="Li R."/>
            <person name="Xu Z."/>
            <person name="Li S."/>
            <person name="Li X."/>
            <person name="Zheng H."/>
            <person name="Cong L."/>
            <person name="Lin L."/>
            <person name="Yin J."/>
            <person name="Geng J."/>
            <person name="Li G."/>
            <person name="Shi J."/>
            <person name="Liu J."/>
            <person name="Lv H."/>
            <person name="Li J."/>
            <person name="Wang J."/>
            <person name="Deng Y."/>
            <person name="Ran L."/>
            <person name="Shi X."/>
            <person name="Wang X."/>
            <person name="Wu Q."/>
            <person name="Li C."/>
            <person name="Ren X."/>
            <person name="Wang J."/>
            <person name="Wang X."/>
            <person name="Li D."/>
            <person name="Liu D."/>
            <person name="Zhang X."/>
            <person name="Ji Z."/>
            <person name="Zhao W."/>
            <person name="Sun Y."/>
            <person name="Zhang Z."/>
            <person name="Bao J."/>
            <person name="Han Y."/>
            <person name="Dong L."/>
            <person name="Ji J."/>
            <person name="Chen P."/>
            <person name="Wu S."/>
            <person name="Liu J."/>
            <person name="Xiao Y."/>
            <person name="Bu D."/>
            <person name="Tan J."/>
            <person name="Yang L."/>
            <person name="Ye C."/>
            <person name="Zhang J."/>
            <person name="Xu J."/>
            <person name="Zhou Y."/>
            <person name="Yu Y."/>
            <person name="Zhang B."/>
            <person name="Zhuang S."/>
            <person name="Wei H."/>
            <person name="Liu B."/>
            <person name="Lei M."/>
            <person name="Yu H."/>
            <person name="Li Y."/>
            <person name="Xu H."/>
            <person name="Wei S."/>
            <person name="He X."/>
            <person name="Fang L."/>
            <person name="Zhang Z."/>
            <person name="Zhang Y."/>
            <person name="Huang X."/>
            <person name="Su Z."/>
            <person name="Tong W."/>
            <person name="Li J."/>
            <person name="Tong Z."/>
            <person name="Li S."/>
            <person name="Ye J."/>
            <person name="Wang L."/>
            <person name="Fang L."/>
            <person name="Lei T."/>
            <person name="Chen C.-S."/>
            <person name="Chen H.-C."/>
            <person name="Xu Z."/>
            <person name="Li H."/>
            <person name="Huang H."/>
            <person name="Zhang F."/>
            <person name="Xu H."/>
            <person name="Li N."/>
            <person name="Zhao C."/>
            <person name="Li S."/>
            <person name="Dong L."/>
            <person name="Huang Y."/>
            <person name="Li L."/>
            <person name="Xi Y."/>
            <person name="Qi Q."/>
            <person name="Li W."/>
            <person name="Zhang B."/>
            <person name="Hu W."/>
            <person name="Zhang Y."/>
            <person name="Tian X."/>
            <person name="Jiao Y."/>
            <person name="Liang X."/>
            <person name="Jin J."/>
            <person name="Gao L."/>
            <person name="Zheng W."/>
            <person name="Hao B."/>
            <person name="Liu S.-M."/>
            <person name="Wang W."/>
            <person name="Yuan L."/>
            <person name="Cao M."/>
            <person name="McDermott J."/>
            <person name="Samudrala R."/>
            <person name="Wang J."/>
            <person name="Wong G.K.-S."/>
            <person name="Yang H."/>
        </authorList>
    </citation>
    <scope>NUCLEOTIDE SEQUENCE [LARGE SCALE GENOMIC DNA]</scope>
    <source>
        <strain>cv. Nipponbare</strain>
    </source>
</reference>
<reference key="5">
    <citation type="journal article" date="2003" name="Science">
        <title>Collection, mapping, and annotation of over 28,000 cDNA clones from japonica rice.</title>
        <authorList>
            <consortium name="The rice full-length cDNA consortium"/>
        </authorList>
    </citation>
    <scope>NUCLEOTIDE SEQUENCE [LARGE SCALE MRNA]</scope>
    <source>
        <strain>cv. Nipponbare</strain>
    </source>
</reference>
<reference key="6">
    <citation type="journal article" date="2004" name="Plant Cell Physiol.">
        <title>Whole genome analysis of the OsGRF gene family encoding plant-specific putative transcription activators in rice (Oryza sativa L.).</title>
        <authorList>
            <person name="Choi D."/>
            <person name="Kim J.H."/>
            <person name="Kende H."/>
        </authorList>
    </citation>
    <scope>IDENTIFICATION</scope>
    <scope>GENE FAMILY</scope>
    <source>
        <strain>cv. Nipponbare</strain>
    </source>
</reference>
<evidence type="ECO:0000250" key="1"/>
<evidence type="ECO:0000255" key="2">
    <source>
        <dbReference type="PROSITE-ProRule" id="PRU01001"/>
    </source>
</evidence>
<evidence type="ECO:0000255" key="3">
    <source>
        <dbReference type="PROSITE-ProRule" id="PRU01002"/>
    </source>
</evidence>
<evidence type="ECO:0000256" key="4">
    <source>
        <dbReference type="SAM" id="MobiDB-lite"/>
    </source>
</evidence>
<evidence type="ECO:0000305" key="5"/>
<dbReference type="EMBL" id="AP005180">
    <property type="protein sequence ID" value="BAD31080.1"/>
    <property type="molecule type" value="Genomic_DNA"/>
</dbReference>
<dbReference type="EMBL" id="AP008213">
    <property type="protein sequence ID" value="BAF21505.1"/>
    <property type="molecule type" value="Genomic_DNA"/>
</dbReference>
<dbReference type="EMBL" id="AP014963">
    <property type="protein sequence ID" value="BAT01404.1"/>
    <property type="molecule type" value="Genomic_DNA"/>
</dbReference>
<dbReference type="EMBL" id="CM000144">
    <property type="protein sequence ID" value="EAZ39737.1"/>
    <property type="molecule type" value="Genomic_DNA"/>
</dbReference>
<dbReference type="EMBL" id="AK066400">
    <property type="protein sequence ID" value="BAG89951.1"/>
    <property type="molecule type" value="mRNA"/>
</dbReference>
<dbReference type="EMBL" id="BK004880">
    <property type="protein sequence ID" value="DAA04955.1"/>
    <property type="molecule type" value="Genomic_DNA"/>
</dbReference>
<dbReference type="RefSeq" id="XP_015644678.1">
    <property type="nucleotide sequence ID" value="XM_015789192.1"/>
</dbReference>
<dbReference type="FunCoup" id="Q6AWX8">
    <property type="interactions" value="764"/>
</dbReference>
<dbReference type="PaxDb" id="39947-Q6AWX8"/>
<dbReference type="EnsemblPlants" id="Os07t0467500-01">
    <property type="protein sequence ID" value="Os07t0467500-01"/>
    <property type="gene ID" value="Os07g0467500"/>
</dbReference>
<dbReference type="Gramene" id="Os07t0467500-01">
    <property type="protein sequence ID" value="Os07t0467500-01"/>
    <property type="gene ID" value="Os07g0467500"/>
</dbReference>
<dbReference type="KEGG" id="dosa:Os07g0467500"/>
<dbReference type="eggNOG" id="ENOG502SJBU">
    <property type="taxonomic scope" value="Eukaryota"/>
</dbReference>
<dbReference type="HOGENOM" id="CLU_1028230_0_0_1"/>
<dbReference type="InParanoid" id="Q6AWX8"/>
<dbReference type="OMA" id="HCFAVIV"/>
<dbReference type="OrthoDB" id="1927209at2759"/>
<dbReference type="Proteomes" id="UP000000763">
    <property type="component" value="Chromosome 7"/>
</dbReference>
<dbReference type="Proteomes" id="UP000007752">
    <property type="component" value="Chromosome 7"/>
</dbReference>
<dbReference type="Proteomes" id="UP000059680">
    <property type="component" value="Chromosome 7"/>
</dbReference>
<dbReference type="GO" id="GO:0005634">
    <property type="term" value="C:nucleus"/>
    <property type="evidence" value="ECO:0007669"/>
    <property type="project" value="UniProtKB-SubCell"/>
</dbReference>
<dbReference type="GO" id="GO:0005524">
    <property type="term" value="F:ATP binding"/>
    <property type="evidence" value="ECO:0007669"/>
    <property type="project" value="InterPro"/>
</dbReference>
<dbReference type="GO" id="GO:0032502">
    <property type="term" value="P:developmental process"/>
    <property type="evidence" value="ECO:0007669"/>
    <property type="project" value="InterPro"/>
</dbReference>
<dbReference type="GO" id="GO:0006351">
    <property type="term" value="P:DNA-templated transcription"/>
    <property type="evidence" value="ECO:0007669"/>
    <property type="project" value="InterPro"/>
</dbReference>
<dbReference type="GO" id="GO:0006355">
    <property type="term" value="P:regulation of DNA-templated transcription"/>
    <property type="evidence" value="ECO:0007669"/>
    <property type="project" value="InterPro"/>
</dbReference>
<dbReference type="InterPro" id="IPR014978">
    <property type="entry name" value="Gln-Leu-Gln_QLQ"/>
</dbReference>
<dbReference type="InterPro" id="IPR031137">
    <property type="entry name" value="GRF"/>
</dbReference>
<dbReference type="InterPro" id="IPR014977">
    <property type="entry name" value="WRC_dom"/>
</dbReference>
<dbReference type="PANTHER" id="PTHR31602:SF14">
    <property type="entry name" value="GROWTH-REGULATING FACTOR 11"/>
    <property type="match status" value="1"/>
</dbReference>
<dbReference type="PANTHER" id="PTHR31602">
    <property type="entry name" value="GROWTH-REGULATING FACTOR 5"/>
    <property type="match status" value="1"/>
</dbReference>
<dbReference type="Pfam" id="PF08880">
    <property type="entry name" value="QLQ"/>
    <property type="match status" value="1"/>
</dbReference>
<dbReference type="Pfam" id="PF08879">
    <property type="entry name" value="WRC"/>
    <property type="match status" value="1"/>
</dbReference>
<dbReference type="SMART" id="SM00951">
    <property type="entry name" value="QLQ"/>
    <property type="match status" value="1"/>
</dbReference>
<dbReference type="PROSITE" id="PS51666">
    <property type="entry name" value="QLQ"/>
    <property type="match status" value="1"/>
</dbReference>
<dbReference type="PROSITE" id="PS51667">
    <property type="entry name" value="WRC"/>
    <property type="match status" value="1"/>
</dbReference>
<gene>
    <name type="primary">GRF11</name>
    <name type="ordered locus">Os07g0467500</name>
    <name type="ordered locus">LOC_Os07g28430</name>
    <name type="ORF">OsJ_24174</name>
    <name type="ORF">P0003B09.18</name>
</gene>
<name>GRF11_ORYSJ</name>
<proteinExistence type="evidence at transcript level"/>
<sequence>MAAEGEAKKDSASNPPGGGGGGGGGEEEEDSSLAVGEAAVGVGEAGGGGGGGEKADREEEEGKEDVEEGGVCKDLVLVEDAVPVEDPEEAAATAALQEEMKALVESVPVGAGAAFTAMQLQELEQQSRVYQYMAARVPVPTHLVFPIWKSVTGASSEGAQKYPTLMGLATLCLDFGKNPEPEPGRCRRTDGKKWRCWRNAIANEKYCERHMHRGRKRPVQLVVEDDEPDSTSGSKPASGKATEGGKKTDDKSSSSKKLAVAAPAAVEST</sequence>
<comment type="function">
    <text evidence="1">Transcription activator that plays a regulatory role in gibberellin-induced stem elongation.</text>
</comment>
<comment type="subcellular location">
    <subcellularLocation>
        <location evidence="3">Nucleus</location>
    </subcellularLocation>
</comment>
<comment type="domain">
    <text>The QLQ domain and WRC domain may be involved in protein-protein interaction and DNA-binding, respectively.</text>
</comment>
<comment type="similarity">
    <text evidence="5">Belongs to the GRF family.</text>
</comment>
<protein>
    <recommendedName>
        <fullName>Growth-regulating factor 11</fullName>
        <shortName>OsGRF11</shortName>
    </recommendedName>
    <alternativeName>
        <fullName>Transcription activator GRF11</fullName>
    </alternativeName>
</protein>
<accession>Q6AWX8</accession>
<accession>A0A0P0X6H9</accession>
<organism>
    <name type="scientific">Oryza sativa subsp. japonica</name>
    <name type="common">Rice</name>
    <dbReference type="NCBI Taxonomy" id="39947"/>
    <lineage>
        <taxon>Eukaryota</taxon>
        <taxon>Viridiplantae</taxon>
        <taxon>Streptophyta</taxon>
        <taxon>Embryophyta</taxon>
        <taxon>Tracheophyta</taxon>
        <taxon>Spermatophyta</taxon>
        <taxon>Magnoliopsida</taxon>
        <taxon>Liliopsida</taxon>
        <taxon>Poales</taxon>
        <taxon>Poaceae</taxon>
        <taxon>BOP clade</taxon>
        <taxon>Oryzoideae</taxon>
        <taxon>Oryzeae</taxon>
        <taxon>Oryzinae</taxon>
        <taxon>Oryza</taxon>
        <taxon>Oryza sativa</taxon>
    </lineage>
</organism>
<feature type="chain" id="PRO_0000419312" description="Growth-regulating factor 11">
    <location>
        <begin position="1"/>
        <end position="269"/>
    </location>
</feature>
<feature type="domain" description="QLQ" evidence="2">
    <location>
        <begin position="114"/>
        <end position="149"/>
    </location>
</feature>
<feature type="domain" description="WRC" evidence="3">
    <location>
        <begin position="180"/>
        <end position="224"/>
    </location>
</feature>
<feature type="region of interest" description="Disordered" evidence="4">
    <location>
        <begin position="1"/>
        <end position="71"/>
    </location>
</feature>
<feature type="region of interest" description="Disordered" evidence="4">
    <location>
        <begin position="212"/>
        <end position="269"/>
    </location>
</feature>
<feature type="short sequence motif" description="Bipartite nuclear localization signal" evidence="3">
    <location>
        <begin position="185"/>
        <end position="195"/>
    </location>
</feature>
<feature type="short sequence motif" description="Bipartite nuclear localization signal" evidence="3">
    <location>
        <begin position="213"/>
        <end position="217"/>
    </location>
</feature>
<feature type="compositionally biased region" description="Basic and acidic residues" evidence="4">
    <location>
        <begin position="1"/>
        <end position="11"/>
    </location>
</feature>
<feature type="compositionally biased region" description="Gly residues" evidence="4">
    <location>
        <begin position="43"/>
        <end position="52"/>
    </location>
</feature>
<feature type="compositionally biased region" description="Acidic residues" evidence="4">
    <location>
        <begin position="58"/>
        <end position="68"/>
    </location>
</feature>
<feature type="compositionally biased region" description="Basic and acidic residues" evidence="4">
    <location>
        <begin position="243"/>
        <end position="253"/>
    </location>
</feature>
<feature type="compositionally biased region" description="Low complexity" evidence="4">
    <location>
        <begin position="255"/>
        <end position="269"/>
    </location>
</feature>
<keyword id="KW-0010">Activator</keyword>
<keyword id="KW-0539">Nucleus</keyword>
<keyword id="KW-1185">Reference proteome</keyword>
<keyword id="KW-0804">Transcription</keyword>
<keyword id="KW-0805">Transcription regulation</keyword>